<proteinExistence type="evidence at transcript level"/>
<accession>Q8BW11</accession>
<organism>
    <name type="scientific">Mus musculus</name>
    <name type="common">Mouse</name>
    <dbReference type="NCBI Taxonomy" id="10090"/>
    <lineage>
        <taxon>Eukaryota</taxon>
        <taxon>Metazoa</taxon>
        <taxon>Chordata</taxon>
        <taxon>Craniata</taxon>
        <taxon>Vertebrata</taxon>
        <taxon>Euteleostomi</taxon>
        <taxon>Mammalia</taxon>
        <taxon>Eutheria</taxon>
        <taxon>Euarchontoglires</taxon>
        <taxon>Glires</taxon>
        <taxon>Rodentia</taxon>
        <taxon>Myomorpha</taxon>
        <taxon>Muroidea</taxon>
        <taxon>Muridae</taxon>
        <taxon>Murinae</taxon>
        <taxon>Mus</taxon>
        <taxon>Mus</taxon>
    </lineage>
</organism>
<evidence type="ECO:0000250" key="1"/>
<evidence type="ECO:0000255" key="2"/>
<evidence type="ECO:0000255" key="3">
    <source>
        <dbReference type="PROSITE-ProRule" id="PRU00274"/>
    </source>
</evidence>
<evidence type="ECO:0000305" key="4"/>
<protein>
    <recommendedName>
        <fullName>Putative inactive serine protease 58</fullName>
        <ecNumber>3.4.21.4</ecNumber>
    </recommendedName>
    <alternativeName>
        <fullName>Trypsin-X3</fullName>
    </alternativeName>
</protein>
<gene>
    <name type="primary">Prss58</name>
    <name type="synonym">Tryx3</name>
</gene>
<sequence length="241" mass="26865">MKLAFLCILSTLLRTFAYNPDHIAGTTPPYLVYLKSDYLPCTGVLIHPLWVITAAHCNLPNLQVILGITNPADPMERDVEVSDYEKIFHHPNFLVSSISHDLLLIKLKRRIKHSNYAKAVKLPQHIVSVNAMCSVSTWAYNLCDVTKDPDSLQTVNVTVISKAECRNAYKAFDITENMICVGIVPGRRLPCKEVTAAPAVCNGVLYGILSYADGCVLRADVGIYASIFHYLPWIEDTMKNN</sequence>
<comment type="catalytic activity">
    <reaction>
        <text>Preferential cleavage: Arg-|-Xaa, Lys-|-Xaa.</text>
        <dbReference type="EC" id="3.4.21.4"/>
    </reaction>
</comment>
<comment type="subcellular location">
    <subcellularLocation>
        <location evidence="4">Secreted</location>
    </subcellularLocation>
</comment>
<comment type="similarity">
    <text evidence="3">Belongs to the peptidase S1 family.</text>
</comment>
<comment type="caution">
    <text evidence="4">Thr-195 is present instead of the conserved Ser which is expected to be an active site residue. It is therefore unsure if this protein has kept its catalytic activity.</text>
</comment>
<keyword id="KW-1015">Disulfide bond</keyword>
<keyword id="KW-0325">Glycoprotein</keyword>
<keyword id="KW-0378">Hydrolase</keyword>
<keyword id="KW-0645">Protease</keyword>
<keyword id="KW-1185">Reference proteome</keyword>
<keyword id="KW-0964">Secreted</keyword>
<keyword id="KW-0720">Serine protease</keyword>
<keyword id="KW-0732">Signal</keyword>
<dbReference type="EC" id="3.4.21.4"/>
<dbReference type="EMBL" id="AE000663">
    <property type="protein sequence ID" value="AAB69042.1"/>
    <property type="molecule type" value="Genomic_DNA"/>
</dbReference>
<dbReference type="EMBL" id="AK075754">
    <property type="protein sequence ID" value="BAC35932.1"/>
    <property type="molecule type" value="mRNA"/>
</dbReference>
<dbReference type="EMBL" id="BC048599">
    <property type="protein sequence ID" value="AAH48599.1"/>
    <property type="molecule type" value="mRNA"/>
</dbReference>
<dbReference type="CCDS" id="CCDS20040.1"/>
<dbReference type="RefSeq" id="NP_778185.1">
    <property type="nucleotide sequence ID" value="NM_175020.3"/>
</dbReference>
<dbReference type="SMR" id="Q8BW11"/>
<dbReference type="FunCoup" id="Q8BW11">
    <property type="interactions" value="38"/>
</dbReference>
<dbReference type="STRING" id="10090.ENSMUSP00000069833"/>
<dbReference type="MEROPS" id="S01.984"/>
<dbReference type="GlyCosmos" id="Q8BW11">
    <property type="glycosylation" value="1 site, No reported glycans"/>
</dbReference>
<dbReference type="GlyGen" id="Q8BW11">
    <property type="glycosylation" value="1 site"/>
</dbReference>
<dbReference type="iPTMnet" id="Q8BW11"/>
<dbReference type="PhosphoSitePlus" id="Q8BW11"/>
<dbReference type="PaxDb" id="10090-ENSMUSP00000069833"/>
<dbReference type="ProteomicsDB" id="291681"/>
<dbReference type="Antibodypedia" id="50270">
    <property type="antibodies" value="30 antibodies from 8 providers"/>
</dbReference>
<dbReference type="DNASU" id="232717"/>
<dbReference type="Ensembl" id="ENSMUST00000063523.5">
    <property type="protein sequence ID" value="ENSMUSP00000069833.4"/>
    <property type="gene ID" value="ENSMUSG00000051936.5"/>
</dbReference>
<dbReference type="GeneID" id="232717"/>
<dbReference type="KEGG" id="mmu:232717"/>
<dbReference type="UCSC" id="uc009bnk.1">
    <property type="organism name" value="mouse"/>
</dbReference>
<dbReference type="AGR" id="MGI:3608323"/>
<dbReference type="CTD" id="136541"/>
<dbReference type="MGI" id="MGI:3608323">
    <property type="gene designation" value="Prss58"/>
</dbReference>
<dbReference type="VEuPathDB" id="HostDB:ENSMUSG00000051936"/>
<dbReference type="eggNOG" id="KOG3627">
    <property type="taxonomic scope" value="Eukaryota"/>
</dbReference>
<dbReference type="GeneTree" id="ENSGT01020000230389"/>
<dbReference type="HOGENOM" id="CLU_006842_1_6_1"/>
<dbReference type="InParanoid" id="Q8BW11"/>
<dbReference type="OMA" id="IEYDLML"/>
<dbReference type="OrthoDB" id="10059102at2759"/>
<dbReference type="PhylomeDB" id="Q8BW11"/>
<dbReference type="TreeFam" id="TF331065"/>
<dbReference type="BioGRID-ORCS" id="232717">
    <property type="hits" value="3 hits in 77 CRISPR screens"/>
</dbReference>
<dbReference type="PRO" id="PR:Q8BW11"/>
<dbReference type="Proteomes" id="UP000000589">
    <property type="component" value="Chromosome 6"/>
</dbReference>
<dbReference type="RNAct" id="Q8BW11">
    <property type="molecule type" value="protein"/>
</dbReference>
<dbReference type="Bgee" id="ENSMUSG00000051936">
    <property type="expression patterns" value="Expressed in spermatid and 4 other cell types or tissues"/>
</dbReference>
<dbReference type="GO" id="GO:0005576">
    <property type="term" value="C:extracellular region"/>
    <property type="evidence" value="ECO:0007669"/>
    <property type="project" value="UniProtKB-SubCell"/>
</dbReference>
<dbReference type="GO" id="GO:0004252">
    <property type="term" value="F:serine-type endopeptidase activity"/>
    <property type="evidence" value="ECO:0007669"/>
    <property type="project" value="UniProtKB-EC"/>
</dbReference>
<dbReference type="GO" id="GO:0006508">
    <property type="term" value="P:proteolysis"/>
    <property type="evidence" value="ECO:0007669"/>
    <property type="project" value="UniProtKB-KW"/>
</dbReference>
<dbReference type="CDD" id="cd00190">
    <property type="entry name" value="Tryp_SPc"/>
    <property type="match status" value="1"/>
</dbReference>
<dbReference type="FunFam" id="2.40.10.10:FF:000049">
    <property type="entry name" value="probable inactive serine protease 37"/>
    <property type="match status" value="1"/>
</dbReference>
<dbReference type="FunFam" id="2.40.10.10:FF:000005">
    <property type="entry name" value="Serine protease 37"/>
    <property type="match status" value="1"/>
</dbReference>
<dbReference type="Gene3D" id="2.40.10.10">
    <property type="entry name" value="Trypsin-like serine proteases"/>
    <property type="match status" value="2"/>
</dbReference>
<dbReference type="InterPro" id="IPR009003">
    <property type="entry name" value="Peptidase_S1_PA"/>
</dbReference>
<dbReference type="InterPro" id="IPR043504">
    <property type="entry name" value="Peptidase_S1_PA_chymotrypsin"/>
</dbReference>
<dbReference type="InterPro" id="IPR001314">
    <property type="entry name" value="Peptidase_S1A"/>
</dbReference>
<dbReference type="InterPro" id="IPR001254">
    <property type="entry name" value="Trypsin_dom"/>
</dbReference>
<dbReference type="InterPro" id="IPR018114">
    <property type="entry name" value="TRYPSIN_HIS"/>
</dbReference>
<dbReference type="PANTHER" id="PTHR24271">
    <property type="entry name" value="KALLIKREIN-RELATED"/>
    <property type="match status" value="1"/>
</dbReference>
<dbReference type="PANTHER" id="PTHR24271:SF56">
    <property type="entry name" value="SERINE PROTEASE 58"/>
    <property type="match status" value="1"/>
</dbReference>
<dbReference type="Pfam" id="PF00089">
    <property type="entry name" value="Trypsin"/>
    <property type="match status" value="1"/>
</dbReference>
<dbReference type="PRINTS" id="PR00722">
    <property type="entry name" value="CHYMOTRYPSIN"/>
</dbReference>
<dbReference type="SMART" id="SM00020">
    <property type="entry name" value="Tryp_SPc"/>
    <property type="match status" value="1"/>
</dbReference>
<dbReference type="SUPFAM" id="SSF50494">
    <property type="entry name" value="Trypsin-like serine proteases"/>
    <property type="match status" value="1"/>
</dbReference>
<dbReference type="PROSITE" id="PS50240">
    <property type="entry name" value="TRYPSIN_DOM"/>
    <property type="match status" value="1"/>
</dbReference>
<dbReference type="PROSITE" id="PS00134">
    <property type="entry name" value="TRYPSIN_HIS"/>
    <property type="match status" value="1"/>
</dbReference>
<feature type="signal peptide" evidence="2">
    <location>
        <begin position="1"/>
        <end position="17"/>
    </location>
</feature>
<feature type="chain" id="PRO_0000317764" description="Putative inactive serine protease 58">
    <location>
        <begin position="18"/>
        <end position="241"/>
    </location>
</feature>
<feature type="domain" description="Peptidase S1" evidence="3">
    <location>
        <begin position="18"/>
        <end position="239"/>
    </location>
</feature>
<feature type="active site" description="Charge relay system" evidence="1">
    <location>
        <position position="56"/>
    </location>
</feature>
<feature type="active site" description="Charge relay system" evidence="1">
    <location>
        <position position="101"/>
    </location>
</feature>
<feature type="glycosylation site" description="N-linked (GlcNAc...) asparagine" evidence="2">
    <location>
        <position position="156"/>
    </location>
</feature>
<feature type="disulfide bond" evidence="3">
    <location>
        <begin position="41"/>
        <end position="57"/>
    </location>
</feature>
<feature type="disulfide bond" evidence="3">
    <location>
        <begin position="133"/>
        <end position="201"/>
    </location>
</feature>
<feature type="disulfide bond" evidence="3">
    <location>
        <begin position="165"/>
        <end position="180"/>
    </location>
</feature>
<feature type="disulfide bond" evidence="3">
    <location>
        <begin position="191"/>
        <end position="215"/>
    </location>
</feature>
<reference key="1">
    <citation type="journal article" date="2001" name="J. Immunol.">
        <title>Differential transcriptional regulation of individual TCR V beta segments before gene rearrangement.</title>
        <authorList>
            <person name="Chen F."/>
            <person name="Rowen L."/>
            <person name="Hood L."/>
            <person name="Rothenberg E.V."/>
        </authorList>
    </citation>
    <scope>NUCLEOTIDE SEQUENCE [GENOMIC DNA]</scope>
</reference>
<reference key="2">
    <citation type="journal article" date="2005" name="Science">
        <title>The transcriptional landscape of the mammalian genome.</title>
        <authorList>
            <person name="Carninci P."/>
            <person name="Kasukawa T."/>
            <person name="Katayama S."/>
            <person name="Gough J."/>
            <person name="Frith M.C."/>
            <person name="Maeda N."/>
            <person name="Oyama R."/>
            <person name="Ravasi T."/>
            <person name="Lenhard B."/>
            <person name="Wells C."/>
            <person name="Kodzius R."/>
            <person name="Shimokawa K."/>
            <person name="Bajic V.B."/>
            <person name="Brenner S.E."/>
            <person name="Batalov S."/>
            <person name="Forrest A.R."/>
            <person name="Zavolan M."/>
            <person name="Davis M.J."/>
            <person name="Wilming L.G."/>
            <person name="Aidinis V."/>
            <person name="Allen J.E."/>
            <person name="Ambesi-Impiombato A."/>
            <person name="Apweiler R."/>
            <person name="Aturaliya R.N."/>
            <person name="Bailey T.L."/>
            <person name="Bansal M."/>
            <person name="Baxter L."/>
            <person name="Beisel K.W."/>
            <person name="Bersano T."/>
            <person name="Bono H."/>
            <person name="Chalk A.M."/>
            <person name="Chiu K.P."/>
            <person name="Choudhary V."/>
            <person name="Christoffels A."/>
            <person name="Clutterbuck D.R."/>
            <person name="Crowe M.L."/>
            <person name="Dalla E."/>
            <person name="Dalrymple B.P."/>
            <person name="de Bono B."/>
            <person name="Della Gatta G."/>
            <person name="di Bernardo D."/>
            <person name="Down T."/>
            <person name="Engstrom P."/>
            <person name="Fagiolini M."/>
            <person name="Faulkner G."/>
            <person name="Fletcher C.F."/>
            <person name="Fukushima T."/>
            <person name="Furuno M."/>
            <person name="Futaki S."/>
            <person name="Gariboldi M."/>
            <person name="Georgii-Hemming P."/>
            <person name="Gingeras T.R."/>
            <person name="Gojobori T."/>
            <person name="Green R.E."/>
            <person name="Gustincich S."/>
            <person name="Harbers M."/>
            <person name="Hayashi Y."/>
            <person name="Hensch T.K."/>
            <person name="Hirokawa N."/>
            <person name="Hill D."/>
            <person name="Huminiecki L."/>
            <person name="Iacono M."/>
            <person name="Ikeo K."/>
            <person name="Iwama A."/>
            <person name="Ishikawa T."/>
            <person name="Jakt M."/>
            <person name="Kanapin A."/>
            <person name="Katoh M."/>
            <person name="Kawasawa Y."/>
            <person name="Kelso J."/>
            <person name="Kitamura H."/>
            <person name="Kitano H."/>
            <person name="Kollias G."/>
            <person name="Krishnan S.P."/>
            <person name="Kruger A."/>
            <person name="Kummerfeld S.K."/>
            <person name="Kurochkin I.V."/>
            <person name="Lareau L.F."/>
            <person name="Lazarevic D."/>
            <person name="Lipovich L."/>
            <person name="Liu J."/>
            <person name="Liuni S."/>
            <person name="McWilliam S."/>
            <person name="Madan Babu M."/>
            <person name="Madera M."/>
            <person name="Marchionni L."/>
            <person name="Matsuda H."/>
            <person name="Matsuzawa S."/>
            <person name="Miki H."/>
            <person name="Mignone F."/>
            <person name="Miyake S."/>
            <person name="Morris K."/>
            <person name="Mottagui-Tabar S."/>
            <person name="Mulder N."/>
            <person name="Nakano N."/>
            <person name="Nakauchi H."/>
            <person name="Ng P."/>
            <person name="Nilsson R."/>
            <person name="Nishiguchi S."/>
            <person name="Nishikawa S."/>
            <person name="Nori F."/>
            <person name="Ohara O."/>
            <person name="Okazaki Y."/>
            <person name="Orlando V."/>
            <person name="Pang K.C."/>
            <person name="Pavan W.J."/>
            <person name="Pavesi G."/>
            <person name="Pesole G."/>
            <person name="Petrovsky N."/>
            <person name="Piazza S."/>
            <person name="Reed J."/>
            <person name="Reid J.F."/>
            <person name="Ring B.Z."/>
            <person name="Ringwald M."/>
            <person name="Rost B."/>
            <person name="Ruan Y."/>
            <person name="Salzberg S.L."/>
            <person name="Sandelin A."/>
            <person name="Schneider C."/>
            <person name="Schoenbach C."/>
            <person name="Sekiguchi K."/>
            <person name="Semple C.A."/>
            <person name="Seno S."/>
            <person name="Sessa L."/>
            <person name="Sheng Y."/>
            <person name="Shibata Y."/>
            <person name="Shimada H."/>
            <person name="Shimada K."/>
            <person name="Silva D."/>
            <person name="Sinclair B."/>
            <person name="Sperling S."/>
            <person name="Stupka E."/>
            <person name="Sugiura K."/>
            <person name="Sultana R."/>
            <person name="Takenaka Y."/>
            <person name="Taki K."/>
            <person name="Tammoja K."/>
            <person name="Tan S.L."/>
            <person name="Tang S."/>
            <person name="Taylor M.S."/>
            <person name="Tegner J."/>
            <person name="Teichmann S.A."/>
            <person name="Ueda H.R."/>
            <person name="van Nimwegen E."/>
            <person name="Verardo R."/>
            <person name="Wei C.L."/>
            <person name="Yagi K."/>
            <person name="Yamanishi H."/>
            <person name="Zabarovsky E."/>
            <person name="Zhu S."/>
            <person name="Zimmer A."/>
            <person name="Hide W."/>
            <person name="Bult C."/>
            <person name="Grimmond S.M."/>
            <person name="Teasdale R.D."/>
            <person name="Liu E.T."/>
            <person name="Brusic V."/>
            <person name="Quackenbush J."/>
            <person name="Wahlestedt C."/>
            <person name="Mattick J.S."/>
            <person name="Hume D.A."/>
            <person name="Kai C."/>
            <person name="Sasaki D."/>
            <person name="Tomaru Y."/>
            <person name="Fukuda S."/>
            <person name="Kanamori-Katayama M."/>
            <person name="Suzuki M."/>
            <person name="Aoki J."/>
            <person name="Arakawa T."/>
            <person name="Iida J."/>
            <person name="Imamura K."/>
            <person name="Itoh M."/>
            <person name="Kato T."/>
            <person name="Kawaji H."/>
            <person name="Kawagashira N."/>
            <person name="Kawashima T."/>
            <person name="Kojima M."/>
            <person name="Kondo S."/>
            <person name="Konno H."/>
            <person name="Nakano K."/>
            <person name="Ninomiya N."/>
            <person name="Nishio T."/>
            <person name="Okada M."/>
            <person name="Plessy C."/>
            <person name="Shibata K."/>
            <person name="Shiraki T."/>
            <person name="Suzuki S."/>
            <person name="Tagami M."/>
            <person name="Waki K."/>
            <person name="Watahiki A."/>
            <person name="Okamura-Oho Y."/>
            <person name="Suzuki H."/>
            <person name="Kawai J."/>
            <person name="Hayashizaki Y."/>
        </authorList>
    </citation>
    <scope>NUCLEOTIDE SEQUENCE [LARGE SCALE MRNA]</scope>
    <source>
        <strain>C57BL/6J</strain>
        <tissue>Testis</tissue>
    </source>
</reference>
<reference key="3">
    <citation type="journal article" date="2004" name="Genome Res.">
        <title>The status, quality, and expansion of the NIH full-length cDNA project: the Mammalian Gene Collection (MGC).</title>
        <authorList>
            <consortium name="The MGC Project Team"/>
        </authorList>
    </citation>
    <scope>NUCLEOTIDE SEQUENCE [LARGE SCALE MRNA]</scope>
    <source>
        <tissue>Testis</tissue>
    </source>
</reference>
<name>PRS58_MOUSE</name>